<feature type="chain" id="PRO_1000135060" description="Imidazole glycerol phosphate synthase subunit HisF">
    <location>
        <begin position="1"/>
        <end position="258"/>
    </location>
</feature>
<feature type="active site" evidence="1">
    <location>
        <position position="11"/>
    </location>
</feature>
<feature type="active site" evidence="1">
    <location>
        <position position="130"/>
    </location>
</feature>
<reference key="1">
    <citation type="submission" date="2007-07" db="EMBL/GenBank/DDBJ databases">
        <title>Complete sequence of chromosome of Xanthobacter autotrophicus Py2.</title>
        <authorList>
            <consortium name="US DOE Joint Genome Institute"/>
            <person name="Copeland A."/>
            <person name="Lucas S."/>
            <person name="Lapidus A."/>
            <person name="Barry K."/>
            <person name="Glavina del Rio T."/>
            <person name="Hammon N."/>
            <person name="Israni S."/>
            <person name="Dalin E."/>
            <person name="Tice H."/>
            <person name="Pitluck S."/>
            <person name="Sims D."/>
            <person name="Brettin T."/>
            <person name="Bruce D."/>
            <person name="Detter J.C."/>
            <person name="Han C."/>
            <person name="Tapia R."/>
            <person name="Brainard J."/>
            <person name="Schmutz J."/>
            <person name="Larimer F."/>
            <person name="Land M."/>
            <person name="Hauser L."/>
            <person name="Kyrpides N."/>
            <person name="Kim E."/>
            <person name="Ensigns S.A."/>
            <person name="Richardson P."/>
        </authorList>
    </citation>
    <scope>NUCLEOTIDE SEQUENCE [LARGE SCALE GENOMIC DNA]</scope>
    <source>
        <strain>ATCC BAA-1158 / Py2</strain>
    </source>
</reference>
<dbReference type="EC" id="4.3.2.10" evidence="1"/>
<dbReference type="EMBL" id="CP000781">
    <property type="protein sequence ID" value="ABS67532.1"/>
    <property type="molecule type" value="Genomic_DNA"/>
</dbReference>
<dbReference type="SMR" id="A7IHN9"/>
<dbReference type="STRING" id="78245.Xaut_2289"/>
<dbReference type="KEGG" id="xau:Xaut_2289"/>
<dbReference type="eggNOG" id="COG0107">
    <property type="taxonomic scope" value="Bacteria"/>
</dbReference>
<dbReference type="HOGENOM" id="CLU_048577_4_0_5"/>
<dbReference type="OrthoDB" id="9781903at2"/>
<dbReference type="PhylomeDB" id="A7IHN9"/>
<dbReference type="UniPathway" id="UPA00031">
    <property type="reaction ID" value="UER00010"/>
</dbReference>
<dbReference type="Proteomes" id="UP000002417">
    <property type="component" value="Chromosome"/>
</dbReference>
<dbReference type="GO" id="GO:0005737">
    <property type="term" value="C:cytoplasm"/>
    <property type="evidence" value="ECO:0007669"/>
    <property type="project" value="UniProtKB-SubCell"/>
</dbReference>
<dbReference type="GO" id="GO:0000107">
    <property type="term" value="F:imidazoleglycerol-phosphate synthase activity"/>
    <property type="evidence" value="ECO:0007669"/>
    <property type="project" value="UniProtKB-UniRule"/>
</dbReference>
<dbReference type="GO" id="GO:0016829">
    <property type="term" value="F:lyase activity"/>
    <property type="evidence" value="ECO:0007669"/>
    <property type="project" value="UniProtKB-KW"/>
</dbReference>
<dbReference type="GO" id="GO:0000105">
    <property type="term" value="P:L-histidine biosynthetic process"/>
    <property type="evidence" value="ECO:0007669"/>
    <property type="project" value="UniProtKB-UniRule"/>
</dbReference>
<dbReference type="CDD" id="cd04731">
    <property type="entry name" value="HisF"/>
    <property type="match status" value="1"/>
</dbReference>
<dbReference type="FunFam" id="3.20.20.70:FF:000006">
    <property type="entry name" value="Imidazole glycerol phosphate synthase subunit HisF"/>
    <property type="match status" value="1"/>
</dbReference>
<dbReference type="Gene3D" id="3.20.20.70">
    <property type="entry name" value="Aldolase class I"/>
    <property type="match status" value="1"/>
</dbReference>
<dbReference type="HAMAP" id="MF_01013">
    <property type="entry name" value="HisF"/>
    <property type="match status" value="1"/>
</dbReference>
<dbReference type="InterPro" id="IPR013785">
    <property type="entry name" value="Aldolase_TIM"/>
</dbReference>
<dbReference type="InterPro" id="IPR006062">
    <property type="entry name" value="His_biosynth"/>
</dbReference>
<dbReference type="InterPro" id="IPR004651">
    <property type="entry name" value="HisF"/>
</dbReference>
<dbReference type="InterPro" id="IPR050064">
    <property type="entry name" value="IGPS_HisA/HisF"/>
</dbReference>
<dbReference type="InterPro" id="IPR011060">
    <property type="entry name" value="RibuloseP-bd_barrel"/>
</dbReference>
<dbReference type="NCBIfam" id="TIGR00735">
    <property type="entry name" value="hisF"/>
    <property type="match status" value="1"/>
</dbReference>
<dbReference type="PANTHER" id="PTHR21235:SF2">
    <property type="entry name" value="IMIDAZOLE GLYCEROL PHOSPHATE SYNTHASE HISHF"/>
    <property type="match status" value="1"/>
</dbReference>
<dbReference type="PANTHER" id="PTHR21235">
    <property type="entry name" value="IMIDAZOLE GLYCEROL PHOSPHATE SYNTHASE SUBUNIT HISF/H IGP SYNTHASE SUBUNIT HISF/H"/>
    <property type="match status" value="1"/>
</dbReference>
<dbReference type="Pfam" id="PF00977">
    <property type="entry name" value="His_biosynth"/>
    <property type="match status" value="1"/>
</dbReference>
<dbReference type="SUPFAM" id="SSF51366">
    <property type="entry name" value="Ribulose-phoshate binding barrel"/>
    <property type="match status" value="1"/>
</dbReference>
<keyword id="KW-0028">Amino-acid biosynthesis</keyword>
<keyword id="KW-0963">Cytoplasm</keyword>
<keyword id="KW-0368">Histidine biosynthesis</keyword>
<keyword id="KW-0456">Lyase</keyword>
<keyword id="KW-1185">Reference proteome</keyword>
<organism>
    <name type="scientific">Xanthobacter autotrophicus (strain ATCC BAA-1158 / Py2)</name>
    <dbReference type="NCBI Taxonomy" id="78245"/>
    <lineage>
        <taxon>Bacteria</taxon>
        <taxon>Pseudomonadati</taxon>
        <taxon>Pseudomonadota</taxon>
        <taxon>Alphaproteobacteria</taxon>
        <taxon>Hyphomicrobiales</taxon>
        <taxon>Xanthobacteraceae</taxon>
        <taxon>Xanthobacter</taxon>
    </lineage>
</organism>
<accession>A7IHN9</accession>
<evidence type="ECO:0000255" key="1">
    <source>
        <dbReference type="HAMAP-Rule" id="MF_01013"/>
    </source>
</evidence>
<protein>
    <recommendedName>
        <fullName evidence="1">Imidazole glycerol phosphate synthase subunit HisF</fullName>
        <ecNumber evidence="1">4.3.2.10</ecNumber>
    </recommendedName>
    <alternativeName>
        <fullName evidence="1">IGP synthase cyclase subunit</fullName>
    </alternativeName>
    <alternativeName>
        <fullName evidence="1">IGP synthase subunit HisF</fullName>
    </alternativeName>
    <alternativeName>
        <fullName evidence="1">ImGP synthase subunit HisF</fullName>
        <shortName evidence="1">IGPS subunit HisF</shortName>
    </alternativeName>
</protein>
<sequence>MLKVRVIPCLDVKDGRVVKGVQFVDLRDAGDPVEAARAYDLAGADELTFLDITASHENRGTILDVVRRTAEQCFMPLTVGGGVRTVDDVRTLLHAGADKVSINTAAVNRRAFVGEAAEKFGEQCIVVAIDAKRVSKEGEENRWEIFTHGGRTPTGIDAIQFAREVVDLGAGEILLTSMDRDGTGQGFDCALTRAVADAVHVPVIASGGVGTLDHLVDGIREGGASAVLAASIFHFGTFTIREAKERLAEAGLPVRLDV</sequence>
<name>HIS6_XANP2</name>
<comment type="function">
    <text evidence="1">IGPS catalyzes the conversion of PRFAR and glutamine to IGP, AICAR and glutamate. The HisF subunit catalyzes the cyclization activity that produces IGP and AICAR from PRFAR using the ammonia provided by the HisH subunit.</text>
</comment>
<comment type="catalytic activity">
    <reaction evidence="1">
        <text>5-[(5-phospho-1-deoxy-D-ribulos-1-ylimino)methylamino]-1-(5-phospho-beta-D-ribosyl)imidazole-4-carboxamide + L-glutamine = D-erythro-1-(imidazol-4-yl)glycerol 3-phosphate + 5-amino-1-(5-phospho-beta-D-ribosyl)imidazole-4-carboxamide + L-glutamate + H(+)</text>
        <dbReference type="Rhea" id="RHEA:24793"/>
        <dbReference type="ChEBI" id="CHEBI:15378"/>
        <dbReference type="ChEBI" id="CHEBI:29985"/>
        <dbReference type="ChEBI" id="CHEBI:58278"/>
        <dbReference type="ChEBI" id="CHEBI:58359"/>
        <dbReference type="ChEBI" id="CHEBI:58475"/>
        <dbReference type="ChEBI" id="CHEBI:58525"/>
        <dbReference type="EC" id="4.3.2.10"/>
    </reaction>
</comment>
<comment type="pathway">
    <text evidence="1">Amino-acid biosynthesis; L-histidine biosynthesis; L-histidine from 5-phospho-alpha-D-ribose 1-diphosphate: step 5/9.</text>
</comment>
<comment type="subunit">
    <text evidence="1">Heterodimer of HisH and HisF.</text>
</comment>
<comment type="subcellular location">
    <subcellularLocation>
        <location evidence="1">Cytoplasm</location>
    </subcellularLocation>
</comment>
<comment type="similarity">
    <text evidence="1">Belongs to the HisA/HisF family.</text>
</comment>
<gene>
    <name evidence="1" type="primary">hisF</name>
    <name type="ordered locus">Xaut_2289</name>
</gene>
<proteinExistence type="inferred from homology"/>